<organism>
    <name type="scientific">Streptococcus pneumoniae serotype 4 (strain ATCC BAA-334 / TIGR4)</name>
    <dbReference type="NCBI Taxonomy" id="170187"/>
    <lineage>
        <taxon>Bacteria</taxon>
        <taxon>Bacillati</taxon>
        <taxon>Bacillota</taxon>
        <taxon>Bacilli</taxon>
        <taxon>Lactobacillales</taxon>
        <taxon>Streptococcaceae</taxon>
        <taxon>Streptococcus</taxon>
    </lineage>
</organism>
<accession>Q97QJ8</accession>
<reference key="1">
    <citation type="journal article" date="2001" name="Science">
        <title>Complete genome sequence of a virulent isolate of Streptococcus pneumoniae.</title>
        <authorList>
            <person name="Tettelin H."/>
            <person name="Nelson K.E."/>
            <person name="Paulsen I.T."/>
            <person name="Eisen J.A."/>
            <person name="Read T.D."/>
            <person name="Peterson S.N."/>
            <person name="Heidelberg J.F."/>
            <person name="DeBoy R.T."/>
            <person name="Haft D.H."/>
            <person name="Dodson R.J."/>
            <person name="Durkin A.S."/>
            <person name="Gwinn M.L."/>
            <person name="Kolonay J.F."/>
            <person name="Nelson W.C."/>
            <person name="Peterson J.D."/>
            <person name="Umayam L.A."/>
            <person name="White O."/>
            <person name="Salzberg S.L."/>
            <person name="Lewis M.R."/>
            <person name="Radune D."/>
            <person name="Holtzapple E.K."/>
            <person name="Khouri H.M."/>
            <person name="Wolf A.M."/>
            <person name="Utterback T.R."/>
            <person name="Hansen C.L."/>
            <person name="McDonald L.A."/>
            <person name="Feldblyum T.V."/>
            <person name="Angiuoli S.V."/>
            <person name="Dickinson T."/>
            <person name="Hickey E.K."/>
            <person name="Holt I.E."/>
            <person name="Loftus B.J."/>
            <person name="Yang F."/>
            <person name="Smith H.O."/>
            <person name="Venter J.C."/>
            <person name="Dougherty B.A."/>
            <person name="Morrison D.A."/>
            <person name="Hollingshead S.K."/>
            <person name="Fraser C.M."/>
        </authorList>
    </citation>
    <scope>NUCLEOTIDE SEQUENCE [LARGE SCALE GENOMIC DNA]</scope>
    <source>
        <strain>ATCC BAA-334 / TIGR4</strain>
    </source>
</reference>
<dbReference type="EC" id="3.1.11.6" evidence="1"/>
<dbReference type="EMBL" id="AE005672">
    <property type="protein sequence ID" value="AAK75314.1"/>
    <property type="molecule type" value="Genomic_DNA"/>
</dbReference>
<dbReference type="PIR" id="A95140">
    <property type="entry name" value="A95140"/>
</dbReference>
<dbReference type="RefSeq" id="WP_000417464.1">
    <property type="nucleotide sequence ID" value="NZ_CP155539.1"/>
</dbReference>
<dbReference type="SMR" id="Q97QJ8"/>
<dbReference type="PaxDb" id="170187-SP_1207"/>
<dbReference type="EnsemblBacteria" id="AAK75314">
    <property type="protein sequence ID" value="AAK75314"/>
    <property type="gene ID" value="SP_1207"/>
</dbReference>
<dbReference type="GeneID" id="45653497"/>
<dbReference type="KEGG" id="spn:SP_1207"/>
<dbReference type="eggNOG" id="COG1570">
    <property type="taxonomic scope" value="Bacteria"/>
</dbReference>
<dbReference type="PhylomeDB" id="Q97QJ8"/>
<dbReference type="BioCyc" id="SPNE170187:G1FZB-1223-MONOMER"/>
<dbReference type="Proteomes" id="UP000000585">
    <property type="component" value="Chromosome"/>
</dbReference>
<dbReference type="GO" id="GO:0005737">
    <property type="term" value="C:cytoplasm"/>
    <property type="evidence" value="ECO:0007669"/>
    <property type="project" value="UniProtKB-SubCell"/>
</dbReference>
<dbReference type="GO" id="GO:0009318">
    <property type="term" value="C:exodeoxyribonuclease VII complex"/>
    <property type="evidence" value="ECO:0007669"/>
    <property type="project" value="InterPro"/>
</dbReference>
<dbReference type="GO" id="GO:0008855">
    <property type="term" value="F:exodeoxyribonuclease VII activity"/>
    <property type="evidence" value="ECO:0007669"/>
    <property type="project" value="UniProtKB-UniRule"/>
</dbReference>
<dbReference type="GO" id="GO:0003676">
    <property type="term" value="F:nucleic acid binding"/>
    <property type="evidence" value="ECO:0007669"/>
    <property type="project" value="InterPro"/>
</dbReference>
<dbReference type="GO" id="GO:0006308">
    <property type="term" value="P:DNA catabolic process"/>
    <property type="evidence" value="ECO:0007669"/>
    <property type="project" value="UniProtKB-UniRule"/>
</dbReference>
<dbReference type="CDD" id="cd04489">
    <property type="entry name" value="ExoVII_LU_OBF"/>
    <property type="match status" value="1"/>
</dbReference>
<dbReference type="HAMAP" id="MF_00378">
    <property type="entry name" value="Exonuc_7_L"/>
    <property type="match status" value="1"/>
</dbReference>
<dbReference type="InterPro" id="IPR003753">
    <property type="entry name" value="Exonuc_VII_L"/>
</dbReference>
<dbReference type="InterPro" id="IPR020579">
    <property type="entry name" value="Exonuc_VII_lsu_C"/>
</dbReference>
<dbReference type="InterPro" id="IPR025824">
    <property type="entry name" value="OB-fold_nuc-bd_dom"/>
</dbReference>
<dbReference type="NCBIfam" id="TIGR00237">
    <property type="entry name" value="xseA"/>
    <property type="match status" value="1"/>
</dbReference>
<dbReference type="PANTHER" id="PTHR30008">
    <property type="entry name" value="EXODEOXYRIBONUCLEASE 7 LARGE SUBUNIT"/>
    <property type="match status" value="1"/>
</dbReference>
<dbReference type="PANTHER" id="PTHR30008:SF0">
    <property type="entry name" value="EXODEOXYRIBONUCLEASE 7 LARGE SUBUNIT"/>
    <property type="match status" value="1"/>
</dbReference>
<dbReference type="Pfam" id="PF02601">
    <property type="entry name" value="Exonuc_VII_L"/>
    <property type="match status" value="1"/>
</dbReference>
<dbReference type="Pfam" id="PF13742">
    <property type="entry name" value="tRNA_anti_2"/>
    <property type="match status" value="1"/>
</dbReference>
<proteinExistence type="inferred from homology"/>
<protein>
    <recommendedName>
        <fullName evidence="1">Exodeoxyribonuclease 7 large subunit</fullName>
        <ecNumber evidence="1">3.1.11.6</ecNumber>
    </recommendedName>
    <alternativeName>
        <fullName evidence="1">Exodeoxyribonuclease VII large subunit</fullName>
        <shortName evidence="1">Exonuclease VII large subunit</shortName>
    </alternativeName>
</protein>
<evidence type="ECO:0000255" key="1">
    <source>
        <dbReference type="HAMAP-Rule" id="MF_00378"/>
    </source>
</evidence>
<name>EX7L_STRPN</name>
<comment type="function">
    <text evidence="1">Bidirectionally degrades single-stranded DNA into large acid-insoluble oligonucleotides, which are then degraded further into small acid-soluble oligonucleotides.</text>
</comment>
<comment type="catalytic activity">
    <reaction evidence="1">
        <text>Exonucleolytic cleavage in either 5'- to 3'- or 3'- to 5'-direction to yield nucleoside 5'-phosphates.</text>
        <dbReference type="EC" id="3.1.11.6"/>
    </reaction>
</comment>
<comment type="subunit">
    <text evidence="1">Heterooligomer composed of large and small subunits.</text>
</comment>
<comment type="subcellular location">
    <subcellularLocation>
        <location evidence="1">Cytoplasm</location>
    </subcellularLocation>
</comment>
<comment type="similarity">
    <text evidence="1">Belongs to the XseA family.</text>
</comment>
<keyword id="KW-0963">Cytoplasm</keyword>
<keyword id="KW-0269">Exonuclease</keyword>
<keyword id="KW-0378">Hydrolase</keyword>
<keyword id="KW-0540">Nuclease</keyword>
<keyword id="KW-1185">Reference proteome</keyword>
<sequence>MEKYLSVTTLTKYLKMKFDKDPYLERVYLTGQVSNFRKRPTHQYFSLKDDHAVIQATIWSGIYQKLGFDLEEGMKINVIGRVQVYEPSGSYSIIIEKAEPDGVGALAIQFEQLKKKLTEEGLFQERFKQALPQFSKRIGVVTSRSGAVIRDIITTVSRRFPGVDILLYPTKVQGEGAAEEIARNIARANQRDDLDLLIIGRGGGSIEDLWAFNEEIVVRAIFESRLPVISSVGHETDVTLADFVADRRAATPTAAAELATPVTKLDVLAHLQNQEKRMVTAVRNVLSKKQEALKKCSQSVIFRQPERLYDGYLQRLDQLQLRLKQSLRTRISDNKQLVQARTHQLVQLSPVTKIQRYQDRLGQLDKLLGSQMALVYDAKVAEAKRLSEALLMLDTSRIVARGYAIVKKEESVVDSVESLKKKDQVTLLMRDGQVELEVKDVKTKEI</sequence>
<feature type="chain" id="PRO_0000197891" description="Exodeoxyribonuclease 7 large subunit">
    <location>
        <begin position="1"/>
        <end position="446"/>
    </location>
</feature>
<gene>
    <name evidence="1" type="primary">xseA</name>
    <name type="ordered locus">SP_1207</name>
</gene>